<proteinExistence type="evidence at protein level"/>
<accession>P93313</accession>
<accession>A0A2P2CLG4</accession>
<name>NU4M_ARATH</name>
<keyword id="KW-0002">3D-structure</keyword>
<keyword id="KW-0249">Electron transport</keyword>
<keyword id="KW-0472">Membrane</keyword>
<keyword id="KW-0496">Mitochondrion</keyword>
<keyword id="KW-0999">Mitochondrion inner membrane</keyword>
<keyword id="KW-0520">NAD</keyword>
<keyword id="KW-1185">Reference proteome</keyword>
<keyword id="KW-0679">Respiratory chain</keyword>
<keyword id="KW-0691">RNA editing</keyword>
<keyword id="KW-1278">Translocase</keyword>
<keyword id="KW-0812">Transmembrane</keyword>
<keyword id="KW-1133">Transmembrane helix</keyword>
<keyword id="KW-0813">Transport</keyword>
<keyword id="KW-0830">Ubiquinone</keyword>
<sequence>MLEHFCECYFNLSGLILCPVLGSIILLFIPNSRIRLIRLIGLCASLITFLYSLVLWIQFDSSTAKFQFVESLRWLPYENINFYLGIDGISLFFVILTTFLIPICILVGWSGMRSYGKEYIIAFLICEFLMIAVFCMLDLLLFYVFFESVLIPMFIIIGVWGSRQRKIKAAYQFFLYTLLGSLFMLLAILLILFQTGTTDLQILLTTEFSERRQIFLWIAFFASFAVKVPMVPVHIWLPEAHVEAPTAGSVILAGILLKFGTYGFLRFSIPMFPEATLCFTPFIYTLSAIAIIYTSLTTLRQIDLKKIIAYSSVAHMNLVTIGMFSLNIQGIGGSILLMLSHGLVSSALFLCVGVLYDRHKTRLVRYYGGLVSTMPNFSTIFFFFTLANMSLPGTSSFIGEFLILVGAFQRNSLVATLAALGMILGAAYSLWLYNRVVSGNLKPDFLHKFSDLNGREVFIFIPFLVGVVWMGVYPKVFLDCMHTSVSNLVQHGKFH</sequence>
<protein>
    <recommendedName>
        <fullName>NADH-ubiquinone oxidoreductase chain 4</fullName>
        <ecNumber>7.1.1.2</ecNumber>
    </recommendedName>
    <alternativeName>
        <fullName>NADH dehydrogenase subunit 4</fullName>
    </alternativeName>
</protein>
<organism>
    <name type="scientific">Arabidopsis thaliana</name>
    <name type="common">Mouse-ear cress</name>
    <dbReference type="NCBI Taxonomy" id="3702"/>
    <lineage>
        <taxon>Eukaryota</taxon>
        <taxon>Viridiplantae</taxon>
        <taxon>Streptophyta</taxon>
        <taxon>Embryophyta</taxon>
        <taxon>Tracheophyta</taxon>
        <taxon>Spermatophyta</taxon>
        <taxon>Magnoliopsida</taxon>
        <taxon>eudicotyledons</taxon>
        <taxon>Gunneridae</taxon>
        <taxon>Pentapetalae</taxon>
        <taxon>rosids</taxon>
        <taxon>malvids</taxon>
        <taxon>Brassicales</taxon>
        <taxon>Brassicaceae</taxon>
        <taxon>Camelineae</taxon>
        <taxon>Arabidopsis</taxon>
    </lineage>
</organism>
<reference key="1">
    <citation type="journal article" date="1997" name="Nat. Genet.">
        <title>The mitochondrial genome of Arabidopsis thaliana contains 57 genes in 366,924 nucleotides.</title>
        <authorList>
            <person name="Unseld M."/>
            <person name="Marienfeld J.R."/>
            <person name="Brandt P."/>
            <person name="Brennicke A."/>
        </authorList>
    </citation>
    <scope>NUCLEOTIDE SEQUENCE [LARGE SCALE GENOMIC DNA]</scope>
    <source>
        <strain>cv. C24</strain>
    </source>
</reference>
<reference key="2">
    <citation type="journal article" date="1999" name="Proc. Natl. Acad. Sci. U.S.A.">
        <title>RNA editing in Arabidopsis mitochondria effects 441 C to U changes in ORFs.</title>
        <authorList>
            <person name="Giege P."/>
            <person name="Brennicke A."/>
        </authorList>
    </citation>
    <scope>NUCLEOTIDE SEQUENCE [GENOMIC DNA]</scope>
    <scope>RNA EDITING</scope>
</reference>
<reference key="3">
    <citation type="journal article" date="2018" name="Plant Cell">
        <title>Correction of persistent errors in Arabidopsis reference mitochondrial genomes.</title>
        <authorList>
            <person name="Sloan D.B."/>
            <person name="Wu Z."/>
            <person name="Sharbrough J."/>
        </authorList>
    </citation>
    <scope>NUCLEOTIDE SEQUENCE [LARGE SCALE GENOMIC DNA]</scope>
    <scope>RNA EDITING</scope>
    <source>
        <strain>cv. Columbia</strain>
    </source>
</reference>
<reference key="4">
    <citation type="journal article" date="1999" name="Nature">
        <title>Sequence and analysis of chromosome 2 of the plant Arabidopsis thaliana.</title>
        <authorList>
            <person name="Lin X."/>
            <person name="Kaul S."/>
            <person name="Rounsley S.D."/>
            <person name="Shea T.P."/>
            <person name="Benito M.-I."/>
            <person name="Town C.D."/>
            <person name="Fujii C.Y."/>
            <person name="Mason T.M."/>
            <person name="Bowman C.L."/>
            <person name="Barnstead M.E."/>
            <person name="Feldblyum T.V."/>
            <person name="Buell C.R."/>
            <person name="Ketchum K.A."/>
            <person name="Lee J.J."/>
            <person name="Ronning C.M."/>
            <person name="Koo H.L."/>
            <person name="Moffat K.S."/>
            <person name="Cronin L.A."/>
            <person name="Shen M."/>
            <person name="Pai G."/>
            <person name="Van Aken S."/>
            <person name="Umayam L."/>
            <person name="Tallon L.J."/>
            <person name="Gill J.E."/>
            <person name="Adams M.D."/>
            <person name="Carrera A.J."/>
            <person name="Creasy T.H."/>
            <person name="Goodman H.M."/>
            <person name="Somerville C.R."/>
            <person name="Copenhaver G.P."/>
            <person name="Preuss D."/>
            <person name="Nierman W.C."/>
            <person name="White O."/>
            <person name="Eisen J.A."/>
            <person name="Salzberg S.L."/>
            <person name="Fraser C.M."/>
            <person name="Venter J.C."/>
        </authorList>
    </citation>
    <scope>NUCLEOTIDE SEQUENCE [LARGE SCALE GENOMIC DNA] (AT2G07717)</scope>
    <source>
        <strain>cv. Columbia</strain>
    </source>
</reference>
<feature type="chain" id="PRO_0000117889" description="NADH-ubiquinone oxidoreductase chain 4">
    <location>
        <begin position="1"/>
        <end position="495"/>
    </location>
</feature>
<feature type="transmembrane region" description="Helical" evidence="2">
    <location>
        <begin position="9"/>
        <end position="29"/>
    </location>
</feature>
<feature type="transmembrane region" description="Helical" evidence="2">
    <location>
        <begin position="39"/>
        <end position="59"/>
    </location>
</feature>
<feature type="transmembrane region" description="Helical" evidence="2">
    <location>
        <begin position="89"/>
        <end position="109"/>
    </location>
</feature>
<feature type="transmembrane region" description="Helical" evidence="2">
    <location>
        <begin position="118"/>
        <end position="138"/>
    </location>
</feature>
<feature type="transmembrane region" description="Helical" evidence="2">
    <location>
        <begin position="173"/>
        <end position="193"/>
    </location>
</feature>
<feature type="transmembrane region" description="Helical" evidence="2">
    <location>
        <begin position="214"/>
        <end position="234"/>
    </location>
</feature>
<feature type="transmembrane region" description="Helical" evidence="2">
    <location>
        <begin position="245"/>
        <end position="265"/>
    </location>
</feature>
<feature type="transmembrane region" description="Helical" evidence="2">
    <location>
        <begin position="272"/>
        <end position="292"/>
    </location>
</feature>
<feature type="transmembrane region" description="Helical" evidence="2">
    <location>
        <begin position="335"/>
        <end position="355"/>
    </location>
</feature>
<feature type="transmembrane region" description="Helical" evidence="2">
    <location>
        <begin position="367"/>
        <end position="387"/>
    </location>
</feature>
<feature type="transmembrane region" description="Helical" evidence="2">
    <location>
        <begin position="413"/>
        <end position="433"/>
    </location>
</feature>
<feature type="transmembrane region" description="Helical" evidence="2">
    <location>
        <begin position="457"/>
        <end position="477"/>
    </location>
</feature>
<feature type="sequence conflict" description="In Ref. 1; CAA69742." evidence="5" ref="1">
    <original>F</original>
    <variation>P</variation>
    <location>
        <position position="146"/>
    </location>
</feature>
<feature type="sequence conflict" description="In Ref. 1; CAA69742." evidence="5" ref="1">
    <original>L</original>
    <variation>P</variation>
    <location>
        <position position="326"/>
    </location>
</feature>
<feature type="sequence conflict" description="In Ref. 1; CAA69742." evidence="5" ref="1">
    <original>F</original>
    <variation>S</variation>
    <location>
        <position position="383"/>
    </location>
</feature>
<feature type="sequence conflict" description="In Ref. 1; CAA69742." evidence="5" ref="1">
    <original>V</original>
    <variation>L</variation>
    <location>
        <position position="467"/>
    </location>
</feature>
<feature type="helix" evidence="6">
    <location>
        <begin position="12"/>
        <end position="27"/>
    </location>
</feature>
<feature type="helix" evidence="6">
    <location>
        <begin position="34"/>
        <end position="57"/>
    </location>
</feature>
<feature type="strand" evidence="6">
    <location>
        <begin position="67"/>
        <end position="73"/>
    </location>
</feature>
<feature type="strand" evidence="6">
    <location>
        <begin position="79"/>
        <end position="86"/>
    </location>
</feature>
<feature type="turn" evidence="6">
    <location>
        <begin position="88"/>
        <end position="90"/>
    </location>
</feature>
<feature type="helix" evidence="6">
    <location>
        <begin position="91"/>
        <end position="107"/>
    </location>
</feature>
<feature type="helix" evidence="6">
    <location>
        <begin position="112"/>
        <end position="115"/>
    </location>
</feature>
<feature type="helix" evidence="6">
    <location>
        <begin position="117"/>
        <end position="134"/>
    </location>
</feature>
<feature type="helix" evidence="6">
    <location>
        <begin position="139"/>
        <end position="148"/>
    </location>
</feature>
<feature type="helix" evidence="6">
    <location>
        <begin position="150"/>
        <end position="160"/>
    </location>
</feature>
<feature type="helix" evidence="6">
    <location>
        <begin position="166"/>
        <end position="195"/>
    </location>
</feature>
<feature type="helix" evidence="6">
    <location>
        <begin position="200"/>
        <end position="203"/>
    </location>
</feature>
<feature type="helix" evidence="6">
    <location>
        <begin position="210"/>
        <end position="227"/>
    </location>
</feature>
<feature type="helix" evidence="6">
    <location>
        <begin position="236"/>
        <end position="243"/>
    </location>
</feature>
<feature type="helix" evidence="6">
    <location>
        <begin position="246"/>
        <end position="254"/>
    </location>
</feature>
<feature type="turn" evidence="6">
    <location>
        <begin position="255"/>
        <end position="257"/>
    </location>
</feature>
<feature type="helix" evidence="6">
    <location>
        <begin position="258"/>
        <end position="266"/>
    </location>
</feature>
<feature type="helix" evidence="7">
    <location>
        <begin position="273"/>
        <end position="278"/>
    </location>
</feature>
<feature type="helix" evidence="7">
    <location>
        <begin position="280"/>
        <end position="299"/>
    </location>
</feature>
<feature type="helix" evidence="7">
    <location>
        <begin position="304"/>
        <end position="324"/>
    </location>
</feature>
<feature type="helix" evidence="7">
    <location>
        <begin position="328"/>
        <end position="359"/>
    </location>
</feature>
<feature type="helix" evidence="7">
    <location>
        <begin position="364"/>
        <end position="366"/>
    </location>
</feature>
<feature type="helix" evidence="7">
    <location>
        <begin position="370"/>
        <end position="372"/>
    </location>
</feature>
<feature type="helix" evidence="7">
    <location>
        <begin position="375"/>
        <end position="388"/>
    </location>
</feature>
<feature type="helix" evidence="7">
    <location>
        <begin position="395"/>
        <end position="410"/>
    </location>
</feature>
<feature type="helix" evidence="7">
    <location>
        <begin position="412"/>
        <end position="419"/>
    </location>
</feature>
<feature type="helix" evidence="7">
    <location>
        <begin position="421"/>
        <end position="436"/>
    </location>
</feature>
<feature type="turn" evidence="7">
    <location>
        <begin position="443"/>
        <end position="445"/>
    </location>
</feature>
<feature type="helix" evidence="7">
    <location>
        <begin position="454"/>
        <end position="472"/>
    </location>
</feature>
<feature type="helix" evidence="7">
    <location>
        <begin position="475"/>
        <end position="490"/>
    </location>
</feature>
<evidence type="ECO:0000250" key="1"/>
<evidence type="ECO:0000255" key="2"/>
<evidence type="ECO:0000269" key="3">
    <source>
    </source>
</evidence>
<evidence type="ECO:0000269" key="4">
    <source>
    </source>
</evidence>
<evidence type="ECO:0000305" key="5"/>
<evidence type="ECO:0007829" key="6">
    <source>
        <dbReference type="PDB" id="8BEF"/>
    </source>
</evidence>
<evidence type="ECO:0007829" key="7">
    <source>
        <dbReference type="PDB" id="8BEH"/>
    </source>
</evidence>
<geneLocation type="mitochondrion"/>
<dbReference type="EC" id="7.1.1.2"/>
<dbReference type="EMBL" id="Y08501">
    <property type="protein sequence ID" value="CAA69742.3"/>
    <property type="status" value="ALT_SEQ"/>
    <property type="molecule type" value="Genomic_DNA"/>
</dbReference>
<dbReference type="EMBL" id="BK010421">
    <property type="protein sequence ID" value="DAB41509.2"/>
    <property type="molecule type" value="Genomic_DNA"/>
</dbReference>
<dbReference type="EMBL" id="AC007729">
    <property type="status" value="NOT_ANNOTATED_CDS"/>
    <property type="molecule type" value="Genomic_DNA"/>
</dbReference>
<dbReference type="RefSeq" id="NP_085518.1">
    <property type="nucleotide sequence ID" value="NC_001284.2"/>
</dbReference>
<dbReference type="PDB" id="7A23">
    <property type="method" value="EM"/>
    <property type="resolution" value="3.70 A"/>
    <property type="chains" value="M=1-495"/>
</dbReference>
<dbReference type="PDB" id="7AQQ">
    <property type="method" value="EM"/>
    <property type="resolution" value="3.06 A"/>
    <property type="chains" value="M=1-495"/>
</dbReference>
<dbReference type="PDB" id="7AQW">
    <property type="method" value="EM"/>
    <property type="resolution" value="3.17 A"/>
    <property type="chains" value="M=1-495"/>
</dbReference>
<dbReference type="PDB" id="7AR7">
    <property type="method" value="EM"/>
    <property type="resolution" value="3.72 A"/>
    <property type="chains" value="M=9-495"/>
</dbReference>
<dbReference type="PDB" id="7AR8">
    <property type="method" value="EM"/>
    <property type="resolution" value="3.53 A"/>
    <property type="chains" value="M=1-495"/>
</dbReference>
<dbReference type="PDB" id="7ARB">
    <property type="method" value="EM"/>
    <property type="resolution" value="3.41 A"/>
    <property type="chains" value="M=1-495"/>
</dbReference>
<dbReference type="PDB" id="8BEF">
    <property type="method" value="EM"/>
    <property type="resolution" value="2.13 A"/>
    <property type="chains" value="M=1-495"/>
</dbReference>
<dbReference type="PDB" id="8BEH">
    <property type="method" value="EM"/>
    <property type="resolution" value="2.29 A"/>
    <property type="chains" value="M=1-495"/>
</dbReference>
<dbReference type="PDB" id="8BPX">
    <property type="method" value="EM"/>
    <property type="resolution" value="2.09 A"/>
    <property type="chains" value="M=1-495"/>
</dbReference>
<dbReference type="PDB" id="8BQ5">
    <property type="method" value="EM"/>
    <property type="resolution" value="2.73 A"/>
    <property type="chains" value="M=1-495"/>
</dbReference>
<dbReference type="PDBsum" id="7A23"/>
<dbReference type="PDBsum" id="7AQQ"/>
<dbReference type="PDBsum" id="7AQW"/>
<dbReference type="PDBsum" id="7AR7"/>
<dbReference type="PDBsum" id="7AR8"/>
<dbReference type="PDBsum" id="7ARB"/>
<dbReference type="PDBsum" id="8BEF"/>
<dbReference type="PDBsum" id="8BEH"/>
<dbReference type="PDBsum" id="8BPX"/>
<dbReference type="PDBsum" id="8BQ5"/>
<dbReference type="EMDB" id="EMD-11875"/>
<dbReference type="EMDB" id="EMD-11876"/>
<dbReference type="EMDB" id="EMD-16000"/>
<dbReference type="EMDB" id="EMD-16003"/>
<dbReference type="EMDB" id="EMD-16168"/>
<dbReference type="SMR" id="P93313"/>
<dbReference type="FunCoup" id="P93313">
    <property type="interactions" value="107"/>
</dbReference>
<dbReference type="IntAct" id="P93313">
    <property type="interactions" value="1"/>
</dbReference>
<dbReference type="STRING" id="3702.A0A2P2CLG4"/>
<dbReference type="GlyGen" id="P93313">
    <property type="glycosylation" value="1 site"/>
</dbReference>
<dbReference type="PaxDb" id="3702-ATMG00580.1"/>
<dbReference type="PeptideAtlas" id="P93313"/>
<dbReference type="Araport" id="ATMG00580"/>
<dbReference type="TAIR" id="ATMG00580">
    <property type="gene designation" value="NAD4"/>
</dbReference>
<dbReference type="eggNOG" id="KOG4845">
    <property type="taxonomic scope" value="Eukaryota"/>
</dbReference>
<dbReference type="InParanoid" id="P93313"/>
<dbReference type="BioCyc" id="ARA:ATMG00580-MONOMER"/>
<dbReference type="PRO" id="PR:P93313"/>
<dbReference type="Proteomes" id="UP000006548">
    <property type="component" value="Mitochondrion MT"/>
</dbReference>
<dbReference type="ExpressionAtlas" id="P93313">
    <property type="expression patterns" value="baseline and differential"/>
</dbReference>
<dbReference type="GO" id="GO:0005743">
    <property type="term" value="C:mitochondrial inner membrane"/>
    <property type="evidence" value="ECO:0007669"/>
    <property type="project" value="UniProtKB-SubCell"/>
</dbReference>
<dbReference type="GO" id="GO:0009536">
    <property type="term" value="C:plastid"/>
    <property type="evidence" value="ECO:0007669"/>
    <property type="project" value="UniProtKB-ARBA"/>
</dbReference>
<dbReference type="GO" id="GO:0045271">
    <property type="term" value="C:respiratory chain complex I"/>
    <property type="evidence" value="ECO:0000318"/>
    <property type="project" value="GO_Central"/>
</dbReference>
<dbReference type="GO" id="GO:0008137">
    <property type="term" value="F:NADH dehydrogenase (ubiquinone) activity"/>
    <property type="evidence" value="ECO:0007669"/>
    <property type="project" value="UniProtKB-EC"/>
</dbReference>
<dbReference type="GO" id="GO:0048039">
    <property type="term" value="F:ubiquinone binding"/>
    <property type="evidence" value="ECO:0000318"/>
    <property type="project" value="GO_Central"/>
</dbReference>
<dbReference type="GO" id="GO:0009060">
    <property type="term" value="P:aerobic respiration"/>
    <property type="evidence" value="ECO:0000318"/>
    <property type="project" value="GO_Central"/>
</dbReference>
<dbReference type="GO" id="GO:0042773">
    <property type="term" value="P:ATP synthesis coupled electron transport"/>
    <property type="evidence" value="ECO:0007669"/>
    <property type="project" value="InterPro"/>
</dbReference>
<dbReference type="GO" id="GO:0015990">
    <property type="term" value="P:electron transport coupled proton transport"/>
    <property type="evidence" value="ECO:0000318"/>
    <property type="project" value="GO_Central"/>
</dbReference>
<dbReference type="InterPro" id="IPR010227">
    <property type="entry name" value="NADH_Q_OxRdtase_chainM/4"/>
</dbReference>
<dbReference type="InterPro" id="IPR003918">
    <property type="entry name" value="NADH_UbQ_OxRdtase"/>
</dbReference>
<dbReference type="InterPro" id="IPR001750">
    <property type="entry name" value="ND/Mrp_TM"/>
</dbReference>
<dbReference type="NCBIfam" id="TIGR01972">
    <property type="entry name" value="NDH_I_M"/>
    <property type="match status" value="1"/>
</dbReference>
<dbReference type="NCBIfam" id="NF004499">
    <property type="entry name" value="PRK05846.1-3"/>
    <property type="match status" value="1"/>
</dbReference>
<dbReference type="PANTHER" id="PTHR43507">
    <property type="entry name" value="NADH-UBIQUINONE OXIDOREDUCTASE CHAIN 4"/>
    <property type="match status" value="1"/>
</dbReference>
<dbReference type="PANTHER" id="PTHR43507:SF1">
    <property type="entry name" value="NADH-UBIQUINONE OXIDOREDUCTASE CHAIN 4"/>
    <property type="match status" value="1"/>
</dbReference>
<dbReference type="Pfam" id="PF00361">
    <property type="entry name" value="Proton_antipo_M"/>
    <property type="match status" value="1"/>
</dbReference>
<dbReference type="PRINTS" id="PR01437">
    <property type="entry name" value="NUOXDRDTASE4"/>
</dbReference>
<comment type="function">
    <text evidence="1">Core subunit of the mitochondrial membrane respiratory chain NADH dehydrogenase (Complex I) that is believed to belong to the minimal assembly required for catalysis. Complex I functions in the transfer of electrons from NADH to the respiratory chain. The immediate electron acceptor for the enzyme is believed to be ubiquinone (By similarity).</text>
</comment>
<comment type="catalytic activity">
    <reaction>
        <text>a ubiquinone + NADH + 5 H(+)(in) = a ubiquinol + NAD(+) + 4 H(+)(out)</text>
        <dbReference type="Rhea" id="RHEA:29091"/>
        <dbReference type="Rhea" id="RHEA-COMP:9565"/>
        <dbReference type="Rhea" id="RHEA-COMP:9566"/>
        <dbReference type="ChEBI" id="CHEBI:15378"/>
        <dbReference type="ChEBI" id="CHEBI:16389"/>
        <dbReference type="ChEBI" id="CHEBI:17976"/>
        <dbReference type="ChEBI" id="CHEBI:57540"/>
        <dbReference type="ChEBI" id="CHEBI:57945"/>
        <dbReference type="EC" id="7.1.1.2"/>
    </reaction>
</comment>
<comment type="subunit">
    <text>Complex I is composed of at least 49 different subunits.</text>
</comment>
<comment type="subcellular location">
    <subcellularLocation>
        <location>Mitochondrion inner membrane</location>
        <topology>Multi-pass membrane protein</topology>
    </subcellularLocation>
</comment>
<comment type="RNA editing">
    <location>
        <position position="10" evidence="3 4"/>
    </location>
    <location>
        <position position="25" evidence="3 4"/>
    </location>
    <location>
        <position position="36" evidence="3 4"/>
    </location>
    <location>
        <position position="53" evidence="3 4"/>
    </location>
    <location>
        <position position="55" evidence="3 4"/>
    </location>
    <location>
        <position position="56" evidence="3 4"/>
    </location>
    <location>
        <position position="66" evidence="3 4"/>
    </location>
    <location>
        <position position="106" evidence="3 4"/>
    </location>
    <location>
        <position position="121" evidence="3 4"/>
    </location>
    <location>
        <position position="126" evidence="3 4"/>
    </location>
    <location>
        <position position="135" evidence="3 4"/>
    </location>
    <location>
        <position position="150" evidence="3 4"/>
    </location>
    <location>
        <position position="203" evidence="3 4"/>
    </location>
    <location>
        <position position="220" evidence="3 4"/>
    </location>
    <location>
        <position position="256" evidence="3 4"/>
    </location>
    <location>
        <position position="262" evidence="3 4"/>
    </location>
    <location>
        <position position="279" evidence="3 4"/>
    </location>
    <location>
        <position position="299" evidence="3 4"/>
    </location>
    <location>
        <position position="337" evidence="3 4"/>
    </location>
    <location>
        <position position="345" evidence="3 4"/>
    </location>
    <location>
        <position position="377" evidence="3 4"/>
    </location>
    <location>
        <position position="391" evidence="3 4"/>
    </location>
    <location>
        <position position="452" evidence="3 4"/>
    </location>
    <location>
        <position position="458" evidence="3 4"/>
    </location>
    <location>
        <position position="469" evidence="3 4"/>
    </location>
    <location>
        <position position="473" evidence="3 4"/>
    </location>
    <location>
        <position position="478" evidence="3 4"/>
    </location>
</comment>
<comment type="miscellaneous">
    <text>A stretch of 270 kb of the mitochondrial genome is duplicated within the centromere of chromosome 2 resulting in the duplication of the gene. The expression of the duplicated gene (At2g07717) is not demonstrated. It is also probably not RNA edited and therefore differs in all the positions known to be edited.</text>
</comment>
<comment type="similarity">
    <text evidence="5">Belongs to the complex I subunit 4 family.</text>
</comment>
<gene>
    <name type="primary">ND4</name>
    <name type="synonym">NAD4</name>
    <name type="ordered locus">AtMg00580</name>
</gene>